<gene>
    <name type="primary">cytR</name>
    <name type="ordered locus">SF4012</name>
    <name type="ordered locus">S3735</name>
</gene>
<reference key="1">
    <citation type="journal article" date="2002" name="Nucleic Acids Res.">
        <title>Genome sequence of Shigella flexneri 2a: insights into pathogenicity through comparison with genomes of Escherichia coli K12 and O157.</title>
        <authorList>
            <person name="Jin Q."/>
            <person name="Yuan Z."/>
            <person name="Xu J."/>
            <person name="Wang Y."/>
            <person name="Shen Y."/>
            <person name="Lu W."/>
            <person name="Wang J."/>
            <person name="Liu H."/>
            <person name="Yang J."/>
            <person name="Yang F."/>
            <person name="Zhang X."/>
            <person name="Zhang J."/>
            <person name="Yang G."/>
            <person name="Wu H."/>
            <person name="Qu D."/>
            <person name="Dong J."/>
            <person name="Sun L."/>
            <person name="Xue Y."/>
            <person name="Zhao A."/>
            <person name="Gao Y."/>
            <person name="Zhu J."/>
            <person name="Kan B."/>
            <person name="Ding K."/>
            <person name="Chen S."/>
            <person name="Cheng H."/>
            <person name="Yao Z."/>
            <person name="He B."/>
            <person name="Chen R."/>
            <person name="Ma D."/>
            <person name="Qiang B."/>
            <person name="Wen Y."/>
            <person name="Hou Y."/>
            <person name="Yu J."/>
        </authorList>
    </citation>
    <scope>NUCLEOTIDE SEQUENCE [LARGE SCALE GENOMIC DNA]</scope>
    <source>
        <strain>301 / Serotype 2a</strain>
    </source>
</reference>
<reference key="2">
    <citation type="journal article" date="2003" name="Infect. Immun.">
        <title>Complete genome sequence and comparative genomics of Shigella flexneri serotype 2a strain 2457T.</title>
        <authorList>
            <person name="Wei J."/>
            <person name="Goldberg M.B."/>
            <person name="Burland V."/>
            <person name="Venkatesan M.M."/>
            <person name="Deng W."/>
            <person name="Fournier G."/>
            <person name="Mayhew G.F."/>
            <person name="Plunkett G. III"/>
            <person name="Rose D.J."/>
            <person name="Darling A."/>
            <person name="Mau B."/>
            <person name="Perna N.T."/>
            <person name="Payne S.M."/>
            <person name="Runyen-Janecky L.J."/>
            <person name="Zhou S."/>
            <person name="Schwartz D.C."/>
            <person name="Blattner F.R."/>
        </authorList>
    </citation>
    <scope>NUCLEOTIDE SEQUENCE [LARGE SCALE GENOMIC DNA]</scope>
    <source>
        <strain>ATCC 700930 / 2457T / Serotype 2a</strain>
    </source>
</reference>
<organism>
    <name type="scientific">Shigella flexneri</name>
    <dbReference type="NCBI Taxonomy" id="623"/>
    <lineage>
        <taxon>Bacteria</taxon>
        <taxon>Pseudomonadati</taxon>
        <taxon>Pseudomonadota</taxon>
        <taxon>Gammaproteobacteria</taxon>
        <taxon>Enterobacterales</taxon>
        <taxon>Enterobacteriaceae</taxon>
        <taxon>Shigella</taxon>
    </lineage>
</organism>
<feature type="chain" id="PRO_0000107941" description="HTH-type transcriptional repressor CytR">
    <location>
        <begin position="1"/>
        <end position="341"/>
    </location>
</feature>
<feature type="domain" description="HTH lacI-type" evidence="2">
    <location>
        <begin position="10"/>
        <end position="64"/>
    </location>
</feature>
<feature type="DNA-binding region" description="H-T-H motif" evidence="2">
    <location>
        <begin position="12"/>
        <end position="31"/>
    </location>
</feature>
<keyword id="KW-0238">DNA-binding</keyword>
<keyword id="KW-1185">Reference proteome</keyword>
<keyword id="KW-0678">Repressor</keyword>
<keyword id="KW-0804">Transcription</keyword>
<keyword id="KW-0805">Transcription regulation</keyword>
<name>CYTR_SHIFL</name>
<evidence type="ECO:0000250" key="1"/>
<evidence type="ECO:0000255" key="2">
    <source>
        <dbReference type="PROSITE-ProRule" id="PRU00111"/>
    </source>
</evidence>
<proteinExistence type="inferred from homology"/>
<comment type="function">
    <text evidence="1">This protein negatively controls the transcription initiation of genes such as deoCABD, udp, and cdd encoding catabolizing enzymes and nupC, nupG, and tsx encoding transporting and pore-forming proteins. Binds cytidine and adenosine as effectors (By similarity).</text>
</comment>
<sequence>MKAKKQETAATMKDVALKAKVSTATVSRALMNPDKVSQATRNRVEKAAREVGYLPQPMGRNVKRNESRTILVIVPDICDPFFSEIIRGIEVTAANHGYLVLIGDCAHQNQQEKTFIDLIITKQIDGMLLLGSRLPFDASIEEQRNLPPMVMANEFAPELELPTVHIDNLTAAFDAVNYLYEQGHKRIGCIAGPEEMPLCHYRLQGYVQALRRCGIMVDPQYIARGDFTFEAGSKAMQQLLDLPQPPTAVFCHSDVMALGALSQAKRQGLKVPEDLSIIGFDNIDLTQFCDPPLTTIAQPRYEIGREAMLLLLDQMQGQHVGSGSRLMDCELIIRGSTRALP</sequence>
<dbReference type="EMBL" id="AE005674">
    <property type="protein sequence ID" value="AAN45445.2"/>
    <property type="molecule type" value="Genomic_DNA"/>
</dbReference>
<dbReference type="EMBL" id="AE014073">
    <property type="protein sequence ID" value="AAP18755.1"/>
    <property type="molecule type" value="Genomic_DNA"/>
</dbReference>
<dbReference type="RefSeq" id="NP_709738.2">
    <property type="nucleotide sequence ID" value="NC_004337.2"/>
</dbReference>
<dbReference type="RefSeq" id="WP_000644904.1">
    <property type="nucleotide sequence ID" value="NZ_WPGW01000012.1"/>
</dbReference>
<dbReference type="BMRB" id="P0ACP0"/>
<dbReference type="SMR" id="P0ACP0"/>
<dbReference type="STRING" id="198214.SF4012"/>
<dbReference type="PaxDb" id="198214-SF4012"/>
<dbReference type="GeneID" id="1024402"/>
<dbReference type="GeneID" id="93777964"/>
<dbReference type="KEGG" id="sfl:SF4012"/>
<dbReference type="KEGG" id="sfx:S3735"/>
<dbReference type="PATRIC" id="fig|198214.7.peg.4727"/>
<dbReference type="HOGENOM" id="CLU_037628_6_0_6"/>
<dbReference type="Proteomes" id="UP000001006">
    <property type="component" value="Chromosome"/>
</dbReference>
<dbReference type="Proteomes" id="UP000002673">
    <property type="component" value="Chromosome"/>
</dbReference>
<dbReference type="GO" id="GO:0003700">
    <property type="term" value="F:DNA-binding transcription factor activity"/>
    <property type="evidence" value="ECO:0007669"/>
    <property type="project" value="TreeGrafter"/>
</dbReference>
<dbReference type="GO" id="GO:0000976">
    <property type="term" value="F:transcription cis-regulatory region binding"/>
    <property type="evidence" value="ECO:0007669"/>
    <property type="project" value="TreeGrafter"/>
</dbReference>
<dbReference type="CDD" id="cd01392">
    <property type="entry name" value="HTH_LacI"/>
    <property type="match status" value="1"/>
</dbReference>
<dbReference type="CDD" id="cd06284">
    <property type="entry name" value="PBP1_LacI-like"/>
    <property type="match status" value="1"/>
</dbReference>
<dbReference type="FunFam" id="1.10.260.40:FF:000012">
    <property type="entry name" value="HTH-type transcriptional regulator GntR"/>
    <property type="match status" value="1"/>
</dbReference>
<dbReference type="FunFam" id="3.40.50.2300:FF:000116">
    <property type="entry name" value="HTH-type transcriptional repressor CytR"/>
    <property type="match status" value="1"/>
</dbReference>
<dbReference type="Gene3D" id="3.40.50.2300">
    <property type="match status" value="2"/>
</dbReference>
<dbReference type="Gene3D" id="1.10.260.40">
    <property type="entry name" value="lambda repressor-like DNA-binding domains"/>
    <property type="match status" value="1"/>
</dbReference>
<dbReference type="InterPro" id="IPR000843">
    <property type="entry name" value="HTH_LacI"/>
</dbReference>
<dbReference type="InterPro" id="IPR046335">
    <property type="entry name" value="LacI/GalR-like_sensor"/>
</dbReference>
<dbReference type="InterPro" id="IPR010982">
    <property type="entry name" value="Lambda_DNA-bd_dom_sf"/>
</dbReference>
<dbReference type="InterPro" id="IPR028082">
    <property type="entry name" value="Peripla_BP_I"/>
</dbReference>
<dbReference type="NCBIfam" id="NF008269">
    <property type="entry name" value="PRK11041.1"/>
    <property type="match status" value="1"/>
</dbReference>
<dbReference type="PANTHER" id="PTHR30146:SF151">
    <property type="entry name" value="HTH-TYPE TRANSCRIPTIONAL REPRESSOR CYTR"/>
    <property type="match status" value="1"/>
</dbReference>
<dbReference type="PANTHER" id="PTHR30146">
    <property type="entry name" value="LACI-RELATED TRANSCRIPTIONAL REPRESSOR"/>
    <property type="match status" value="1"/>
</dbReference>
<dbReference type="Pfam" id="PF00356">
    <property type="entry name" value="LacI"/>
    <property type="match status" value="1"/>
</dbReference>
<dbReference type="Pfam" id="PF13377">
    <property type="entry name" value="Peripla_BP_3"/>
    <property type="match status" value="1"/>
</dbReference>
<dbReference type="SMART" id="SM00354">
    <property type="entry name" value="HTH_LACI"/>
    <property type="match status" value="1"/>
</dbReference>
<dbReference type="SUPFAM" id="SSF47413">
    <property type="entry name" value="lambda repressor-like DNA-binding domains"/>
    <property type="match status" value="1"/>
</dbReference>
<dbReference type="SUPFAM" id="SSF53822">
    <property type="entry name" value="Periplasmic binding protein-like I"/>
    <property type="match status" value="1"/>
</dbReference>
<dbReference type="PROSITE" id="PS00356">
    <property type="entry name" value="HTH_LACI_1"/>
    <property type="match status" value="1"/>
</dbReference>
<dbReference type="PROSITE" id="PS50932">
    <property type="entry name" value="HTH_LACI_2"/>
    <property type="match status" value="1"/>
</dbReference>
<protein>
    <recommendedName>
        <fullName>HTH-type transcriptional repressor CytR</fullName>
    </recommendedName>
</protein>
<accession>P0ACP0</accession>
<accession>P06964</accession>